<feature type="chain" id="PRO_1000019707" description="Serine--tRNA ligase">
    <location>
        <begin position="1"/>
        <end position="427"/>
    </location>
</feature>
<feature type="binding site" evidence="1">
    <location>
        <begin position="232"/>
        <end position="234"/>
    </location>
    <ligand>
        <name>L-serine</name>
        <dbReference type="ChEBI" id="CHEBI:33384"/>
    </ligand>
</feature>
<feature type="binding site" evidence="1">
    <location>
        <begin position="263"/>
        <end position="265"/>
    </location>
    <ligand>
        <name>ATP</name>
        <dbReference type="ChEBI" id="CHEBI:30616"/>
    </ligand>
</feature>
<feature type="binding site" evidence="1">
    <location>
        <position position="286"/>
    </location>
    <ligand>
        <name>L-serine</name>
        <dbReference type="ChEBI" id="CHEBI:33384"/>
    </ligand>
</feature>
<feature type="binding site" evidence="1">
    <location>
        <begin position="350"/>
        <end position="353"/>
    </location>
    <ligand>
        <name>ATP</name>
        <dbReference type="ChEBI" id="CHEBI:30616"/>
    </ligand>
</feature>
<feature type="binding site" evidence="1">
    <location>
        <position position="385"/>
    </location>
    <ligand>
        <name>L-serine</name>
        <dbReference type="ChEBI" id="CHEBI:33384"/>
    </ligand>
</feature>
<reference key="1">
    <citation type="journal article" date="2006" name="Proc. Natl. Acad. Sci. U.S.A.">
        <title>Comparative genomics of the lactic acid bacteria.</title>
        <authorList>
            <person name="Makarova K.S."/>
            <person name="Slesarev A."/>
            <person name="Wolf Y.I."/>
            <person name="Sorokin A."/>
            <person name="Mirkin B."/>
            <person name="Koonin E.V."/>
            <person name="Pavlov A."/>
            <person name="Pavlova N."/>
            <person name="Karamychev V."/>
            <person name="Polouchine N."/>
            <person name="Shakhova V."/>
            <person name="Grigoriev I."/>
            <person name="Lou Y."/>
            <person name="Rohksar D."/>
            <person name="Lucas S."/>
            <person name="Huang K."/>
            <person name="Goodstein D.M."/>
            <person name="Hawkins T."/>
            <person name="Plengvidhya V."/>
            <person name="Welker D."/>
            <person name="Hughes J."/>
            <person name="Goh Y."/>
            <person name="Benson A."/>
            <person name="Baldwin K."/>
            <person name="Lee J.-H."/>
            <person name="Diaz-Muniz I."/>
            <person name="Dosti B."/>
            <person name="Smeianov V."/>
            <person name="Wechter W."/>
            <person name="Barabote R."/>
            <person name="Lorca G."/>
            <person name="Altermann E."/>
            <person name="Barrangou R."/>
            <person name="Ganesan B."/>
            <person name="Xie Y."/>
            <person name="Rawsthorne H."/>
            <person name="Tamir D."/>
            <person name="Parker C."/>
            <person name="Breidt F."/>
            <person name="Broadbent J.R."/>
            <person name="Hutkins R."/>
            <person name="O'Sullivan D."/>
            <person name="Steele J."/>
            <person name="Unlu G."/>
            <person name="Saier M.H. Jr."/>
            <person name="Klaenhammer T."/>
            <person name="Richardson P."/>
            <person name="Kozyavkin S."/>
            <person name="Weimer B.C."/>
            <person name="Mills D.A."/>
        </authorList>
    </citation>
    <scope>NUCLEOTIDE SEQUENCE [LARGE SCALE GENOMIC DNA]</scope>
    <source>
        <strain>ATCC 334 / BCRC 17002 / CCUG 31169 / CIP 107868 / KCTC 3260 / NRRL B-441</strain>
    </source>
</reference>
<comment type="function">
    <text evidence="1">Catalyzes the attachment of serine to tRNA(Ser). Is also able to aminoacylate tRNA(Sec) with serine, to form the misacylated tRNA L-seryl-tRNA(Sec), which will be further converted into selenocysteinyl-tRNA(Sec).</text>
</comment>
<comment type="catalytic activity">
    <reaction evidence="1">
        <text>tRNA(Ser) + L-serine + ATP = L-seryl-tRNA(Ser) + AMP + diphosphate + H(+)</text>
        <dbReference type="Rhea" id="RHEA:12292"/>
        <dbReference type="Rhea" id="RHEA-COMP:9669"/>
        <dbReference type="Rhea" id="RHEA-COMP:9703"/>
        <dbReference type="ChEBI" id="CHEBI:15378"/>
        <dbReference type="ChEBI" id="CHEBI:30616"/>
        <dbReference type="ChEBI" id="CHEBI:33019"/>
        <dbReference type="ChEBI" id="CHEBI:33384"/>
        <dbReference type="ChEBI" id="CHEBI:78442"/>
        <dbReference type="ChEBI" id="CHEBI:78533"/>
        <dbReference type="ChEBI" id="CHEBI:456215"/>
        <dbReference type="EC" id="6.1.1.11"/>
    </reaction>
</comment>
<comment type="catalytic activity">
    <reaction evidence="1">
        <text>tRNA(Sec) + L-serine + ATP = L-seryl-tRNA(Sec) + AMP + diphosphate + H(+)</text>
        <dbReference type="Rhea" id="RHEA:42580"/>
        <dbReference type="Rhea" id="RHEA-COMP:9742"/>
        <dbReference type="Rhea" id="RHEA-COMP:10128"/>
        <dbReference type="ChEBI" id="CHEBI:15378"/>
        <dbReference type="ChEBI" id="CHEBI:30616"/>
        <dbReference type="ChEBI" id="CHEBI:33019"/>
        <dbReference type="ChEBI" id="CHEBI:33384"/>
        <dbReference type="ChEBI" id="CHEBI:78442"/>
        <dbReference type="ChEBI" id="CHEBI:78533"/>
        <dbReference type="ChEBI" id="CHEBI:456215"/>
        <dbReference type="EC" id="6.1.1.11"/>
    </reaction>
</comment>
<comment type="pathway">
    <text evidence="1">Aminoacyl-tRNA biosynthesis; selenocysteinyl-tRNA(Sec) biosynthesis; L-seryl-tRNA(Sec) from L-serine and tRNA(Sec): step 1/1.</text>
</comment>
<comment type="subunit">
    <text evidence="1">Homodimer. The tRNA molecule binds across the dimer.</text>
</comment>
<comment type="subcellular location">
    <subcellularLocation>
        <location evidence="1">Cytoplasm</location>
    </subcellularLocation>
</comment>
<comment type="domain">
    <text evidence="1">Consists of two distinct domains, a catalytic core and a N-terminal extension that is involved in tRNA binding.</text>
</comment>
<comment type="similarity">
    <text evidence="1">Belongs to the class-II aminoacyl-tRNA synthetase family. Type-1 seryl-tRNA synthetase subfamily.</text>
</comment>
<protein>
    <recommendedName>
        <fullName evidence="1">Serine--tRNA ligase</fullName>
        <ecNumber evidence="1">6.1.1.11</ecNumber>
    </recommendedName>
    <alternativeName>
        <fullName evidence="1">Seryl-tRNA synthetase</fullName>
        <shortName evidence="1">SerRS</shortName>
    </alternativeName>
    <alternativeName>
        <fullName evidence="1">Seryl-tRNA(Ser/Sec) synthetase</fullName>
    </alternativeName>
</protein>
<name>SYS_LACP3</name>
<sequence>MLDLKLIRQKPEWAKEKLAARAIKGEEIDELLALDTRRRQVTVQTEELKAKRNDVSGQIAVMKRNKENADDQIKAMREVGQKIAALDKELAQLNEKVTYILVRLPNFPADDVPMSLNEDDSREEYKWGNMPTFDFEPKHHWDIGEKLGILDFERAAKVAGSRFVYYKGAGARLERAVYNFFLDEHQKEGYEEIIPPYLVNNDSMFGTGQFPKFTDATYTITNDGEPLTLIPTAEVPLVNYYRNDIIDAEKLPVNFTALTPAFRSEAGSAGRDTRGLIRMHQFNKVEMVKFCKPEDSWKQLQNLIHDAEDLLQKLGLPYHVITLASNDASFTSAKTNDLEVWMPAQDRYREISSCSNCTDFQARRAQIRYRDDDGKLQFVHTLNGSGLAVGRTVASILENYQQADGSVKIPDVIVPYMQGQTAITKED</sequence>
<gene>
    <name evidence="1" type="primary">serS</name>
    <name type="ordered locus">LSEI_1836</name>
</gene>
<accession>Q037M7</accession>
<dbReference type="EC" id="6.1.1.11" evidence="1"/>
<dbReference type="EMBL" id="CP000423">
    <property type="protein sequence ID" value="ABJ70595.1"/>
    <property type="molecule type" value="Genomic_DNA"/>
</dbReference>
<dbReference type="RefSeq" id="WP_004562115.1">
    <property type="nucleotide sequence ID" value="NC_008526.1"/>
</dbReference>
<dbReference type="RefSeq" id="YP_807037.1">
    <property type="nucleotide sequence ID" value="NC_008526.1"/>
</dbReference>
<dbReference type="SMR" id="Q037M7"/>
<dbReference type="STRING" id="321967.LSEI_1836"/>
<dbReference type="PaxDb" id="321967-LSEI_1836"/>
<dbReference type="KEGG" id="lca:LSEI_1836"/>
<dbReference type="PATRIC" id="fig|321967.11.peg.1808"/>
<dbReference type="HOGENOM" id="CLU_023797_1_1_9"/>
<dbReference type="UniPathway" id="UPA00906">
    <property type="reaction ID" value="UER00895"/>
</dbReference>
<dbReference type="Proteomes" id="UP000001651">
    <property type="component" value="Chromosome"/>
</dbReference>
<dbReference type="GO" id="GO:0005737">
    <property type="term" value="C:cytoplasm"/>
    <property type="evidence" value="ECO:0007669"/>
    <property type="project" value="UniProtKB-SubCell"/>
</dbReference>
<dbReference type="GO" id="GO:0005524">
    <property type="term" value="F:ATP binding"/>
    <property type="evidence" value="ECO:0007669"/>
    <property type="project" value="UniProtKB-UniRule"/>
</dbReference>
<dbReference type="GO" id="GO:0140096">
    <property type="term" value="F:catalytic activity, acting on a protein"/>
    <property type="evidence" value="ECO:0007669"/>
    <property type="project" value="UniProtKB-ARBA"/>
</dbReference>
<dbReference type="GO" id="GO:0004828">
    <property type="term" value="F:serine-tRNA ligase activity"/>
    <property type="evidence" value="ECO:0007669"/>
    <property type="project" value="UniProtKB-UniRule"/>
</dbReference>
<dbReference type="GO" id="GO:0016740">
    <property type="term" value="F:transferase activity"/>
    <property type="evidence" value="ECO:0007669"/>
    <property type="project" value="UniProtKB-ARBA"/>
</dbReference>
<dbReference type="GO" id="GO:0016260">
    <property type="term" value="P:selenocysteine biosynthetic process"/>
    <property type="evidence" value="ECO:0007669"/>
    <property type="project" value="UniProtKB-UniRule"/>
</dbReference>
<dbReference type="GO" id="GO:0006434">
    <property type="term" value="P:seryl-tRNA aminoacylation"/>
    <property type="evidence" value="ECO:0007669"/>
    <property type="project" value="UniProtKB-UniRule"/>
</dbReference>
<dbReference type="CDD" id="cd00770">
    <property type="entry name" value="SerRS_core"/>
    <property type="match status" value="1"/>
</dbReference>
<dbReference type="Gene3D" id="3.30.930.10">
    <property type="entry name" value="Bira Bifunctional Protein, Domain 2"/>
    <property type="match status" value="1"/>
</dbReference>
<dbReference type="Gene3D" id="1.10.287.40">
    <property type="entry name" value="Serine-tRNA synthetase, tRNA binding domain"/>
    <property type="match status" value="1"/>
</dbReference>
<dbReference type="HAMAP" id="MF_00176">
    <property type="entry name" value="Ser_tRNA_synth_type1"/>
    <property type="match status" value="1"/>
</dbReference>
<dbReference type="InterPro" id="IPR002314">
    <property type="entry name" value="aa-tRNA-synt_IIb"/>
</dbReference>
<dbReference type="InterPro" id="IPR006195">
    <property type="entry name" value="aa-tRNA-synth_II"/>
</dbReference>
<dbReference type="InterPro" id="IPR045864">
    <property type="entry name" value="aa-tRNA-synth_II/BPL/LPL"/>
</dbReference>
<dbReference type="InterPro" id="IPR002317">
    <property type="entry name" value="Ser-tRNA-ligase_type_1"/>
</dbReference>
<dbReference type="InterPro" id="IPR015866">
    <property type="entry name" value="Ser-tRNA-synth_1_N"/>
</dbReference>
<dbReference type="InterPro" id="IPR042103">
    <property type="entry name" value="SerRS_1_N_sf"/>
</dbReference>
<dbReference type="InterPro" id="IPR033729">
    <property type="entry name" value="SerRS_core"/>
</dbReference>
<dbReference type="InterPro" id="IPR010978">
    <property type="entry name" value="tRNA-bd_arm"/>
</dbReference>
<dbReference type="NCBIfam" id="TIGR00414">
    <property type="entry name" value="serS"/>
    <property type="match status" value="1"/>
</dbReference>
<dbReference type="PANTHER" id="PTHR43697:SF1">
    <property type="entry name" value="SERINE--TRNA LIGASE"/>
    <property type="match status" value="1"/>
</dbReference>
<dbReference type="PANTHER" id="PTHR43697">
    <property type="entry name" value="SERYL-TRNA SYNTHETASE"/>
    <property type="match status" value="1"/>
</dbReference>
<dbReference type="Pfam" id="PF02403">
    <property type="entry name" value="Seryl_tRNA_N"/>
    <property type="match status" value="1"/>
</dbReference>
<dbReference type="Pfam" id="PF00587">
    <property type="entry name" value="tRNA-synt_2b"/>
    <property type="match status" value="1"/>
</dbReference>
<dbReference type="PIRSF" id="PIRSF001529">
    <property type="entry name" value="Ser-tRNA-synth_IIa"/>
    <property type="match status" value="1"/>
</dbReference>
<dbReference type="PRINTS" id="PR00981">
    <property type="entry name" value="TRNASYNTHSER"/>
</dbReference>
<dbReference type="SUPFAM" id="SSF55681">
    <property type="entry name" value="Class II aaRS and biotin synthetases"/>
    <property type="match status" value="1"/>
</dbReference>
<dbReference type="SUPFAM" id="SSF46589">
    <property type="entry name" value="tRNA-binding arm"/>
    <property type="match status" value="1"/>
</dbReference>
<dbReference type="PROSITE" id="PS50862">
    <property type="entry name" value="AA_TRNA_LIGASE_II"/>
    <property type="match status" value="1"/>
</dbReference>
<proteinExistence type="inferred from homology"/>
<organism>
    <name type="scientific">Lacticaseibacillus paracasei (strain ATCC 334 / BCRC 17002 / CCUG 31169 / CIP 107868 / KCTC 3260 / NRRL B-441)</name>
    <name type="common">Lactobacillus paracasei</name>
    <dbReference type="NCBI Taxonomy" id="321967"/>
    <lineage>
        <taxon>Bacteria</taxon>
        <taxon>Bacillati</taxon>
        <taxon>Bacillota</taxon>
        <taxon>Bacilli</taxon>
        <taxon>Lactobacillales</taxon>
        <taxon>Lactobacillaceae</taxon>
        <taxon>Lacticaseibacillus</taxon>
    </lineage>
</organism>
<evidence type="ECO:0000255" key="1">
    <source>
        <dbReference type="HAMAP-Rule" id="MF_00176"/>
    </source>
</evidence>
<keyword id="KW-0030">Aminoacyl-tRNA synthetase</keyword>
<keyword id="KW-0067">ATP-binding</keyword>
<keyword id="KW-0963">Cytoplasm</keyword>
<keyword id="KW-0436">Ligase</keyword>
<keyword id="KW-0547">Nucleotide-binding</keyword>
<keyword id="KW-0648">Protein biosynthesis</keyword>
<keyword id="KW-1185">Reference proteome</keyword>